<protein>
    <recommendedName>
        <fullName evidence="2">Adenylyltransferase and sulfurtransferase MOCS3</fullName>
    </recommendedName>
    <alternativeName>
        <fullName evidence="2">Molybdenum cofactor synthesis protein 3</fullName>
    </alternativeName>
    <domain>
        <recommendedName>
            <fullName evidence="2">Molybdopterin-synthase adenylyltransferase</fullName>
            <ecNumber evidence="2">2.7.7.80</ecNumber>
        </recommendedName>
        <alternativeName>
            <fullName evidence="2">Adenylyltransferase MOCS3</fullName>
        </alternativeName>
        <alternativeName>
            <fullName evidence="2">Sulfur carrier protein MOCS2A adenylyltransferase</fullName>
        </alternativeName>
    </domain>
    <domain>
        <recommendedName>
            <fullName evidence="2">Molybdopterin-synthase sulfurtransferase</fullName>
            <ecNumber evidence="2">2.8.1.11</ecNumber>
        </recommendedName>
        <alternativeName>
            <fullName evidence="2">Sulfur carrier protein MOCS2A sulfurtransferase</fullName>
        </alternativeName>
        <alternativeName>
            <fullName evidence="2">Sulfurtransferase MOCS3</fullName>
        </alternativeName>
    </domain>
</protein>
<reference key="1">
    <citation type="submission" date="2007-03" db="EMBL/GenBank/DDBJ databases">
        <title>Annotation of Culex pipiens quinquefasciatus.</title>
        <authorList>
            <consortium name="The Broad Institute Genome Sequencing Platform"/>
            <person name="Atkinson P.W."/>
            <person name="Hemingway J."/>
            <person name="Christensen B.M."/>
            <person name="Higgs S."/>
            <person name="Kodira C.D."/>
            <person name="Hannick L.I."/>
            <person name="Megy K."/>
            <person name="O'Leary S.B."/>
            <person name="Pearson M."/>
            <person name="Haas B.J."/>
            <person name="Mauceli E."/>
            <person name="Wortman J.R."/>
            <person name="Lee N.H."/>
            <person name="Guigo R."/>
            <person name="Stanke M."/>
            <person name="Alvarado L."/>
            <person name="Amedeo P."/>
            <person name="Antoine C.H."/>
            <person name="Arensburger P."/>
            <person name="Bidwell S.L."/>
            <person name="Crawford M."/>
            <person name="Camaro F."/>
            <person name="Devon K."/>
            <person name="Engels R."/>
            <person name="Hammond M."/>
            <person name="Howarth C."/>
            <person name="Koehrsen M."/>
            <person name="Lawson D."/>
            <person name="Montgomery P."/>
            <person name="Nene V."/>
            <person name="Nusbaum C."/>
            <person name="Puiu D."/>
            <person name="Romero-Severson J."/>
            <person name="Severson D.W."/>
            <person name="Shumway M."/>
            <person name="Sisk P."/>
            <person name="Stolte C."/>
            <person name="Zeng Q."/>
            <person name="Eisenstadt E."/>
            <person name="Fraser-Liggett C.M."/>
            <person name="Strausberg R."/>
            <person name="Galagan J."/>
            <person name="Birren B."/>
            <person name="Collins F.H."/>
        </authorList>
    </citation>
    <scope>NUCLEOTIDE SEQUENCE [LARGE SCALE GENOMIC DNA]</scope>
    <source>
        <strain>JHB</strain>
    </source>
</reference>
<gene>
    <name type="ORF">CPIJ001621</name>
</gene>
<comment type="function">
    <text evidence="2">Plays a central role in 2-thiolation of mcm(5)S(2)U at tRNA wobble positions of cytosolic tRNA(Lys), tRNA(Glu) and tRNA(Gln). Also essential during biosynthesis of the molybdenum cofactor. Acts by mediating the C-terminal thiocarboxylation of sulfur carriers URM1 and MOCS2A. Its N-terminus first activates URM1 and MOCS2A as acyl-adenylates (-COAMP), then the persulfide sulfur on the catalytic cysteine is transferred to URM1 and MOCS2A to form thiocarboxylation (-COSH) of their C-terminus. The reaction probably involves hydrogen sulfide that is generated from the persulfide intermediate and that acts as a nucleophile towards URM1 and MOCS2A. Subsequently, a transient disulfide bond is formed. Does not use thiosulfate as sulfur donor; NFS1 probably acting as a sulfur donor for thiocarboxylation reactions.</text>
</comment>
<comment type="catalytic activity">
    <reaction evidence="2">
        <text>[molybdopterin-synthase sulfur-carrier protein]-C-terminal Gly-Gly + ATP + H(+) = [molybdopterin-synthase sulfur-carrier protein]-C-terminal Gly-Gly-AMP + diphosphate</text>
        <dbReference type="Rhea" id="RHEA:43616"/>
        <dbReference type="Rhea" id="RHEA-COMP:12159"/>
        <dbReference type="Rhea" id="RHEA-COMP:12202"/>
        <dbReference type="ChEBI" id="CHEBI:15378"/>
        <dbReference type="ChEBI" id="CHEBI:30616"/>
        <dbReference type="ChEBI" id="CHEBI:33019"/>
        <dbReference type="ChEBI" id="CHEBI:90618"/>
        <dbReference type="ChEBI" id="CHEBI:90778"/>
        <dbReference type="EC" id="2.7.7.80"/>
    </reaction>
</comment>
<comment type="catalytic activity">
    <reaction evidence="2">
        <text>[molybdopterin-synthase sulfur-carrier protein]-C-terminal Gly-Gly-AMP + S-sulfanyl-L-cysteinyl-[cysteine desulfurase] + AH2 = [molybdopterin-synthase sulfur-carrier protein]-C-terminal-Gly-aminoethanethioate + L-cysteinyl-[cysteine desulfurase] + A + AMP + 2 H(+)</text>
        <dbReference type="Rhea" id="RHEA:48612"/>
        <dbReference type="Rhea" id="RHEA-COMP:12157"/>
        <dbReference type="Rhea" id="RHEA-COMP:12158"/>
        <dbReference type="Rhea" id="RHEA-COMP:12159"/>
        <dbReference type="Rhea" id="RHEA-COMP:19907"/>
        <dbReference type="ChEBI" id="CHEBI:13193"/>
        <dbReference type="ChEBI" id="CHEBI:15378"/>
        <dbReference type="ChEBI" id="CHEBI:17499"/>
        <dbReference type="ChEBI" id="CHEBI:29950"/>
        <dbReference type="ChEBI" id="CHEBI:61963"/>
        <dbReference type="ChEBI" id="CHEBI:90618"/>
        <dbReference type="ChEBI" id="CHEBI:232372"/>
        <dbReference type="ChEBI" id="CHEBI:456215"/>
        <dbReference type="EC" id="2.8.1.11"/>
    </reaction>
</comment>
<comment type="cofactor">
    <cofactor evidence="2">
        <name>Zn(2+)</name>
        <dbReference type="ChEBI" id="CHEBI:29105"/>
    </cofactor>
    <text evidence="2">Binds 1 zinc ion per subunit.</text>
</comment>
<comment type="pathway">
    <text evidence="2">tRNA modification; 5-methoxycarbonylmethyl-2-thiouridine-tRNA biosynthesis.</text>
</comment>
<comment type="pathway">
    <text evidence="2">Cofactor biosynthesis; molybdopterin biosynthesis.</text>
</comment>
<comment type="subcellular location">
    <subcellularLocation>
        <location evidence="1">Cytoplasm</location>
        <location evidence="1">Cytosol</location>
    </subcellularLocation>
</comment>
<comment type="similarity">
    <text evidence="2">In the N-terminal section; belongs to the HesA/MoeB/ThiF family. UBA4 subfamily.</text>
</comment>
<name>MOCS3_CULQU</name>
<dbReference type="EC" id="2.7.7.80" evidence="2"/>
<dbReference type="EC" id="2.8.1.11" evidence="2"/>
<dbReference type="EMBL" id="DS231831">
    <property type="protein sequence ID" value="EDS31220.1"/>
    <property type="molecule type" value="Genomic_DNA"/>
</dbReference>
<dbReference type="RefSeq" id="XP_001843161.1">
    <property type="nucleotide sequence ID" value="XM_001843109.1"/>
</dbReference>
<dbReference type="SMR" id="B0W377"/>
<dbReference type="FunCoup" id="B0W377">
    <property type="interactions" value="414"/>
</dbReference>
<dbReference type="STRING" id="7176.B0W377"/>
<dbReference type="EnsemblMetazoa" id="CPIJ001621-RA">
    <property type="protein sequence ID" value="CPIJ001621-PA"/>
    <property type="gene ID" value="CPIJ001621"/>
</dbReference>
<dbReference type="KEGG" id="cqu:CpipJ_CPIJ001621"/>
<dbReference type="VEuPathDB" id="VectorBase:CPIJ001621"/>
<dbReference type="VEuPathDB" id="VectorBase:CQUJHB006117"/>
<dbReference type="eggNOG" id="KOG2017">
    <property type="taxonomic scope" value="Eukaryota"/>
</dbReference>
<dbReference type="HOGENOM" id="CLU_013325_1_2_1"/>
<dbReference type="InParanoid" id="B0W377"/>
<dbReference type="OMA" id="IPDVGMD"/>
<dbReference type="OrthoDB" id="10255449at2759"/>
<dbReference type="PhylomeDB" id="B0W377"/>
<dbReference type="UniPathway" id="UPA00344"/>
<dbReference type="UniPathway" id="UPA00988"/>
<dbReference type="Proteomes" id="UP000002320">
    <property type="component" value="Unassembled WGS sequence"/>
</dbReference>
<dbReference type="GO" id="GO:0005829">
    <property type="term" value="C:cytosol"/>
    <property type="evidence" value="ECO:0000250"/>
    <property type="project" value="UniProtKB"/>
</dbReference>
<dbReference type="GO" id="GO:0005524">
    <property type="term" value="F:ATP binding"/>
    <property type="evidence" value="ECO:0007669"/>
    <property type="project" value="UniProtKB-KW"/>
</dbReference>
<dbReference type="GO" id="GO:0046872">
    <property type="term" value="F:metal ion binding"/>
    <property type="evidence" value="ECO:0007669"/>
    <property type="project" value="UniProtKB-KW"/>
</dbReference>
<dbReference type="GO" id="GO:0061605">
    <property type="term" value="F:molybdopterin-synthase adenylyltransferase activity"/>
    <property type="evidence" value="ECO:0007669"/>
    <property type="project" value="UniProtKB-EC"/>
</dbReference>
<dbReference type="GO" id="GO:0061604">
    <property type="term" value="F:molybdopterin-synthase sulfurtransferase activity"/>
    <property type="evidence" value="ECO:0000250"/>
    <property type="project" value="UniProtKB"/>
</dbReference>
<dbReference type="GO" id="GO:0004792">
    <property type="term" value="F:thiosulfate-cyanide sulfurtransferase activity"/>
    <property type="evidence" value="ECO:0007669"/>
    <property type="project" value="TreeGrafter"/>
</dbReference>
<dbReference type="GO" id="GO:0042292">
    <property type="term" value="F:URM1 activating enzyme activity"/>
    <property type="evidence" value="ECO:0007669"/>
    <property type="project" value="TreeGrafter"/>
</dbReference>
<dbReference type="GO" id="GO:0006777">
    <property type="term" value="P:Mo-molybdopterin cofactor biosynthetic process"/>
    <property type="evidence" value="ECO:0000250"/>
    <property type="project" value="UniProtKB"/>
</dbReference>
<dbReference type="GO" id="GO:0032447">
    <property type="term" value="P:protein urmylation"/>
    <property type="evidence" value="ECO:0007669"/>
    <property type="project" value="TreeGrafter"/>
</dbReference>
<dbReference type="GO" id="GO:0002143">
    <property type="term" value="P:tRNA wobble position uridine thiolation"/>
    <property type="evidence" value="ECO:0007669"/>
    <property type="project" value="InterPro"/>
</dbReference>
<dbReference type="CDD" id="cd00757">
    <property type="entry name" value="ThiF_MoeB_HesA_family"/>
    <property type="match status" value="1"/>
</dbReference>
<dbReference type="FunFam" id="3.40.250.10:FF:000014">
    <property type="entry name" value="Adenylyltransferase and sulfurtransferase MOCS3"/>
    <property type="match status" value="1"/>
</dbReference>
<dbReference type="FunFam" id="3.40.50.720:FF:000206">
    <property type="entry name" value="Adenylyltransferase and sulfurtransferase MOCS3"/>
    <property type="match status" value="1"/>
</dbReference>
<dbReference type="Gene3D" id="3.40.50.720">
    <property type="entry name" value="NAD(P)-binding Rossmann-like Domain"/>
    <property type="match status" value="1"/>
</dbReference>
<dbReference type="Gene3D" id="3.40.250.10">
    <property type="entry name" value="Rhodanese-like domain"/>
    <property type="match status" value="1"/>
</dbReference>
<dbReference type="HAMAP" id="MF_03049">
    <property type="entry name" value="MOCS3_Uba4"/>
    <property type="match status" value="1"/>
</dbReference>
<dbReference type="InterPro" id="IPR028885">
    <property type="entry name" value="MOCS3/Uba4"/>
</dbReference>
<dbReference type="InterPro" id="IPR001763">
    <property type="entry name" value="Rhodanese-like_dom"/>
</dbReference>
<dbReference type="InterPro" id="IPR036873">
    <property type="entry name" value="Rhodanese-like_dom_sf"/>
</dbReference>
<dbReference type="InterPro" id="IPR045886">
    <property type="entry name" value="ThiF/MoeB/HesA"/>
</dbReference>
<dbReference type="InterPro" id="IPR000594">
    <property type="entry name" value="ThiF_NAD_FAD-bd"/>
</dbReference>
<dbReference type="InterPro" id="IPR035985">
    <property type="entry name" value="Ubiquitin-activating_enz"/>
</dbReference>
<dbReference type="NCBIfam" id="NF004281">
    <property type="entry name" value="PRK05690.1"/>
    <property type="match status" value="1"/>
</dbReference>
<dbReference type="PANTHER" id="PTHR10953:SF102">
    <property type="entry name" value="ADENYLYLTRANSFERASE AND SULFURTRANSFERASE MOCS3"/>
    <property type="match status" value="1"/>
</dbReference>
<dbReference type="PANTHER" id="PTHR10953">
    <property type="entry name" value="UBIQUITIN-ACTIVATING ENZYME E1"/>
    <property type="match status" value="1"/>
</dbReference>
<dbReference type="Pfam" id="PF00581">
    <property type="entry name" value="Rhodanese"/>
    <property type="match status" value="1"/>
</dbReference>
<dbReference type="Pfam" id="PF00899">
    <property type="entry name" value="ThiF"/>
    <property type="match status" value="1"/>
</dbReference>
<dbReference type="SMART" id="SM00450">
    <property type="entry name" value="RHOD"/>
    <property type="match status" value="1"/>
</dbReference>
<dbReference type="SUPFAM" id="SSF69572">
    <property type="entry name" value="Activating enzymes of the ubiquitin-like proteins"/>
    <property type="match status" value="1"/>
</dbReference>
<dbReference type="PROSITE" id="PS50206">
    <property type="entry name" value="RHODANESE_3"/>
    <property type="match status" value="1"/>
</dbReference>
<evidence type="ECO:0000250" key="1">
    <source>
        <dbReference type="UniProtKB" id="O95396"/>
    </source>
</evidence>
<evidence type="ECO:0000255" key="2">
    <source>
        <dbReference type="HAMAP-Rule" id="MF_03049"/>
    </source>
</evidence>
<keyword id="KW-0067">ATP-binding</keyword>
<keyword id="KW-0963">Cytoplasm</keyword>
<keyword id="KW-0479">Metal-binding</keyword>
<keyword id="KW-0501">Molybdenum cofactor biosynthesis</keyword>
<keyword id="KW-0511">Multifunctional enzyme</keyword>
<keyword id="KW-0547">Nucleotide-binding</keyword>
<keyword id="KW-0548">Nucleotidyltransferase</keyword>
<keyword id="KW-1185">Reference proteome</keyword>
<keyword id="KW-0808">Transferase</keyword>
<keyword id="KW-0819">tRNA processing</keyword>
<keyword id="KW-0862">Zinc</keyword>
<sequence length="438" mass="48275">MEGDTEIAELESDIRTLRKQLKEKVQQLKTLKKHFQKNCITKLNNNEIARYSRQIILSEIGVQGQLKLKRASVLVVGAGGLGCPSSLYLAGAGVGHIGILDYDEVELTNLHRQLLHTESTVGLTKVDSARDYLQELNSQIEVSTHHTQLTSDNALTILEQYDIVVDATDNVATRYLLNDACVLLKKPLVSGSALQLEGQLTVYNHKSGPCYRCLFPNPPPPETVTNCGDGGVLGAITGVIGALQALETIKIILGNDGVLSGRLLLFDGHQSSFRNLKLRGKKADCVACSDNPSLTKLIDYEQFCSMKATDKDSHLDLLSPEERITVQEYKSIVDSKQRHVLVDVRGANQFEICQLPCSVNVPIEDILKNRRGVTDILGSSESDDEVAVFVVCRRGNDSQLAVRHLAPLFKERGLPTPRDIVGGLHAWTRNVDKEFPIY</sequence>
<proteinExistence type="inferred from homology"/>
<organism>
    <name type="scientific">Culex quinquefasciatus</name>
    <name type="common">Southern house mosquito</name>
    <name type="synonym">Culex pungens</name>
    <dbReference type="NCBI Taxonomy" id="7176"/>
    <lineage>
        <taxon>Eukaryota</taxon>
        <taxon>Metazoa</taxon>
        <taxon>Ecdysozoa</taxon>
        <taxon>Arthropoda</taxon>
        <taxon>Hexapoda</taxon>
        <taxon>Insecta</taxon>
        <taxon>Pterygota</taxon>
        <taxon>Neoptera</taxon>
        <taxon>Endopterygota</taxon>
        <taxon>Diptera</taxon>
        <taxon>Nematocera</taxon>
        <taxon>Culicoidea</taxon>
        <taxon>Culicidae</taxon>
        <taxon>Culicinae</taxon>
        <taxon>Culicini</taxon>
        <taxon>Culex</taxon>
        <taxon>Culex</taxon>
    </lineage>
</organism>
<accession>B0W377</accession>
<feature type="chain" id="PRO_0000369200" description="Adenylyltransferase and sulfurtransferase MOCS3">
    <location>
        <begin position="1"/>
        <end position="438"/>
    </location>
</feature>
<feature type="domain" description="Rhodanese" evidence="2">
    <location>
        <begin position="335"/>
        <end position="436"/>
    </location>
</feature>
<feature type="active site" description="Glycyl thioester intermediate; for adenylyltransferase activity" evidence="2">
    <location>
        <position position="227"/>
    </location>
</feature>
<feature type="active site" description="Cysteine persulfide intermediate; for sulfurtransferase activity" evidence="2">
    <location>
        <position position="392"/>
    </location>
</feature>
<feature type="binding site" evidence="2">
    <location>
        <position position="80"/>
    </location>
    <ligand>
        <name>ATP</name>
        <dbReference type="ChEBI" id="CHEBI:30616"/>
    </ligand>
</feature>
<feature type="binding site" evidence="2">
    <location>
        <position position="101"/>
    </location>
    <ligand>
        <name>ATP</name>
        <dbReference type="ChEBI" id="CHEBI:30616"/>
    </ligand>
</feature>
<feature type="binding site" evidence="2">
    <location>
        <begin position="108"/>
        <end position="112"/>
    </location>
    <ligand>
        <name>ATP</name>
        <dbReference type="ChEBI" id="CHEBI:30616"/>
    </ligand>
</feature>
<feature type="binding site" evidence="2">
    <location>
        <position position="125"/>
    </location>
    <ligand>
        <name>ATP</name>
        <dbReference type="ChEBI" id="CHEBI:30616"/>
    </ligand>
</feature>
<feature type="binding site" evidence="2">
    <location>
        <begin position="169"/>
        <end position="170"/>
    </location>
    <ligand>
        <name>ATP</name>
        <dbReference type="ChEBI" id="CHEBI:30616"/>
    </ligand>
</feature>
<feature type="binding site" evidence="2">
    <location>
        <position position="210"/>
    </location>
    <ligand>
        <name>Zn(2+)</name>
        <dbReference type="ChEBI" id="CHEBI:29105"/>
    </ligand>
</feature>
<feature type="binding site" evidence="2">
    <location>
        <position position="213"/>
    </location>
    <ligand>
        <name>Zn(2+)</name>
        <dbReference type="ChEBI" id="CHEBI:29105"/>
    </ligand>
</feature>
<feature type="binding site" evidence="2">
    <location>
        <position position="285"/>
    </location>
    <ligand>
        <name>Zn(2+)</name>
        <dbReference type="ChEBI" id="CHEBI:29105"/>
    </ligand>
</feature>
<feature type="binding site" evidence="2">
    <location>
        <position position="288"/>
    </location>
    <ligand>
        <name>Zn(2+)</name>
        <dbReference type="ChEBI" id="CHEBI:29105"/>
    </ligand>
</feature>